<accession>P32950</accession>
<name>CARP2_CANPA</name>
<evidence type="ECO:0000250" key="1"/>
<evidence type="ECO:0000255" key="2"/>
<evidence type="ECO:0000255" key="3">
    <source>
        <dbReference type="PROSITE-ProRule" id="PRU01103"/>
    </source>
</evidence>
<evidence type="ECO:0000255" key="4">
    <source>
        <dbReference type="PROSITE-ProRule" id="PRU10094"/>
    </source>
</evidence>
<evidence type="ECO:0000269" key="5">
    <source>
    </source>
</evidence>
<evidence type="ECO:0000305" key="6"/>
<proteinExistence type="evidence at protein level"/>
<organism>
    <name type="scientific">Candida parapsilosis</name>
    <name type="common">Yeast</name>
    <dbReference type="NCBI Taxonomy" id="5480"/>
    <lineage>
        <taxon>Eukaryota</taxon>
        <taxon>Fungi</taxon>
        <taxon>Dikarya</taxon>
        <taxon>Ascomycota</taxon>
        <taxon>Saccharomycotina</taxon>
        <taxon>Pichiomycetes</taxon>
        <taxon>Debaryomycetaceae</taxon>
        <taxon>Candida/Lodderomyces clade</taxon>
        <taxon>Candida</taxon>
    </lineage>
</organism>
<comment type="catalytic activity">
    <reaction>
        <text>Preferential cleavage at the carboxyl of hydrophobic amino acids, but fails to cleave 15-Leu-|-Tyr-16, 16-Tyr-|-Leu-17 and 24-Phe-|-Phe-25 of insulin B chain. Activates trypsinogen, and degrades keratin.</text>
        <dbReference type="EC" id="3.4.23.24"/>
    </reaction>
</comment>
<comment type="subcellular location">
    <subcellularLocation>
        <location>Secreted</location>
    </subcellularLocation>
</comment>
<comment type="PTM">
    <text evidence="6">O-glycosylated.</text>
</comment>
<comment type="similarity">
    <text evidence="6">Belongs to the peptidase A1 family.</text>
</comment>
<reference key="1">
    <citation type="journal article" date="1993" name="J. Gen. Microbiol.">
        <title>Cloning and sequencing of two Candida parapsilosis genes encoding acid proteases.</title>
        <authorList>
            <person name="de Viragh P.A."/>
            <person name="Sanglard D."/>
            <person name="Togni G."/>
            <person name="Falchetto R."/>
            <person name="Monod M."/>
        </authorList>
    </citation>
    <scope>NUCLEOTIDE SEQUENCE [GENOMIC DNA]</scope>
    <source>
        <strain>Isolate CHUV E18</strain>
    </source>
</reference>
<reference key="2">
    <citation type="journal article" date="1993" name="FEBS Lett.">
        <title>Candida parapsilosis expresses and secretes two aspartic proteinases.</title>
        <authorList>
            <person name="Fusek M."/>
            <person name="Smith E.A."/>
            <person name="Monod M."/>
            <person name="Foundling S.I."/>
        </authorList>
    </citation>
    <scope>PROTEIN SEQUENCE OF 62-68</scope>
    <source>
        <strain>Isolate CHUV E18</strain>
    </source>
</reference>
<gene>
    <name type="primary">SAPP2</name>
    <name type="synonym">ACPL</name>
</gene>
<dbReference type="EC" id="3.4.23.24"/>
<dbReference type="EMBL" id="Z11918">
    <property type="protein sequence ID" value="CAA77976.1"/>
    <property type="molecule type" value="Genomic_DNA"/>
</dbReference>
<dbReference type="SMR" id="P32950"/>
<dbReference type="MEROPS" id="A01.076"/>
<dbReference type="GlyCosmos" id="P32950">
    <property type="glycosylation" value="1 site, No reported glycans"/>
</dbReference>
<dbReference type="VEuPathDB" id="FungiDB:CPAR2_102580"/>
<dbReference type="BRENDA" id="3.4.23.24">
    <property type="organism ID" value="1133"/>
</dbReference>
<dbReference type="GO" id="GO:0005576">
    <property type="term" value="C:extracellular region"/>
    <property type="evidence" value="ECO:0007669"/>
    <property type="project" value="UniProtKB-SubCell"/>
</dbReference>
<dbReference type="GO" id="GO:0004190">
    <property type="term" value="F:aspartic-type endopeptidase activity"/>
    <property type="evidence" value="ECO:0007669"/>
    <property type="project" value="UniProtKB-KW"/>
</dbReference>
<dbReference type="GO" id="GO:0006508">
    <property type="term" value="P:proteolysis"/>
    <property type="evidence" value="ECO:0007669"/>
    <property type="project" value="UniProtKB-KW"/>
</dbReference>
<dbReference type="CDD" id="cd05474">
    <property type="entry name" value="SAP_like"/>
    <property type="match status" value="1"/>
</dbReference>
<dbReference type="FunFam" id="2.40.70.10:FF:000011">
    <property type="entry name" value="Aspartic protease"/>
    <property type="match status" value="1"/>
</dbReference>
<dbReference type="Gene3D" id="2.40.70.10">
    <property type="entry name" value="Acid Proteases"/>
    <property type="match status" value="2"/>
</dbReference>
<dbReference type="InterPro" id="IPR001461">
    <property type="entry name" value="Aspartic_peptidase_A1"/>
</dbReference>
<dbReference type="InterPro" id="IPR001969">
    <property type="entry name" value="Aspartic_peptidase_AS"/>
</dbReference>
<dbReference type="InterPro" id="IPR033121">
    <property type="entry name" value="PEPTIDASE_A1"/>
</dbReference>
<dbReference type="InterPro" id="IPR021109">
    <property type="entry name" value="Peptidase_aspartic_dom_sf"/>
</dbReference>
<dbReference type="InterPro" id="IPR033876">
    <property type="entry name" value="SAP-like"/>
</dbReference>
<dbReference type="PANTHER" id="PTHR47966:SF65">
    <property type="entry name" value="ASPARTIC-TYPE ENDOPEPTIDASE"/>
    <property type="match status" value="1"/>
</dbReference>
<dbReference type="PANTHER" id="PTHR47966">
    <property type="entry name" value="BETA-SITE APP-CLEAVING ENZYME, ISOFORM A-RELATED"/>
    <property type="match status" value="1"/>
</dbReference>
<dbReference type="Pfam" id="PF00026">
    <property type="entry name" value="Asp"/>
    <property type="match status" value="1"/>
</dbReference>
<dbReference type="PRINTS" id="PR00792">
    <property type="entry name" value="PEPSIN"/>
</dbReference>
<dbReference type="SUPFAM" id="SSF50630">
    <property type="entry name" value="Acid proteases"/>
    <property type="match status" value="1"/>
</dbReference>
<dbReference type="PROSITE" id="PS00141">
    <property type="entry name" value="ASP_PROTEASE"/>
    <property type="match status" value="2"/>
</dbReference>
<dbReference type="PROSITE" id="PS51767">
    <property type="entry name" value="PEPTIDASE_A1"/>
    <property type="match status" value="1"/>
</dbReference>
<feature type="signal peptide" description="Or 18, or 21" evidence="2">
    <location>
        <begin position="1"/>
        <end position="25"/>
    </location>
</feature>
<feature type="propeptide" id="PRO_0000025871" description="Activation peptide" evidence="5">
    <location>
        <begin position="26"/>
        <end position="61"/>
    </location>
</feature>
<feature type="chain" id="PRO_0000025872" description="Candidapepsin-2">
    <location>
        <begin position="62"/>
        <end position="412"/>
    </location>
</feature>
<feature type="domain" description="Peptidase A1" evidence="3">
    <location>
        <begin position="75"/>
        <end position="383"/>
    </location>
</feature>
<feature type="active site" evidence="4">
    <location>
        <position position="93"/>
    </location>
</feature>
<feature type="active site" evidence="4">
    <location>
        <position position="273"/>
    </location>
</feature>
<feature type="glycosylation site" description="N-linked (GlcNAc...) asparagine" evidence="2">
    <location>
        <position position="53"/>
    </location>
</feature>
<feature type="disulfide bond" evidence="1">
    <location>
        <begin position="108"/>
        <end position="113"/>
    </location>
</feature>
<feature type="disulfide bond" evidence="1">
    <location>
        <begin position="311"/>
        <end position="345"/>
    </location>
</feature>
<sequence length="412" mass="44443">MTTIAIFTKNVLLAIAFALFAQGAAIPDPAKRDDNPGFVALDFEVTRKPLDVNATSELSKRSSPSSPLYFEGPSYGIRVSVGSNKQEQQVVLDTGSSDFWVVDSSASCQKGNCKQYGTFDPHSSTSFKSLGSSFRSIGYGDKSSSIGTWGQDTIYLGGTSITNQRFADVTSTSVNQGILGVGRVETESANPPYDNVPITLKKQGKIKTNAYSLYLNSPGAATGTIIFGGVDNAKYSGKLIEEPLVSDRYLAVNLKSLNYNGDNSNAGFGVVVDSGTTISYLPDSIVNDLANKVGAYLEPVGLGNELYFIDCNANPQGSASFTFDNGAKITVPLSEFVLQSTANACVWGLQSSDRQNVPPILGDNFLRHAYAFQLDKETVLSRSGEVHFCLKCFSNLETSIVWKAFFYNRYIQ</sequence>
<keyword id="KW-0064">Aspartyl protease</keyword>
<keyword id="KW-0165">Cleavage on pair of basic residues</keyword>
<keyword id="KW-0903">Direct protein sequencing</keyword>
<keyword id="KW-1015">Disulfide bond</keyword>
<keyword id="KW-0325">Glycoprotein</keyword>
<keyword id="KW-0378">Hydrolase</keyword>
<keyword id="KW-0645">Protease</keyword>
<keyword id="KW-0964">Secreted</keyword>
<keyword id="KW-0732">Signal</keyword>
<keyword id="KW-0865">Zymogen</keyword>
<protein>
    <recommendedName>
        <fullName>Candidapepsin-2</fullName>
        <ecNumber>3.4.23.24</ecNumber>
    </recommendedName>
    <alternativeName>
        <fullName>ACP 2</fullName>
    </alternativeName>
    <alternativeName>
        <fullName>Aspartate protease 2</fullName>
    </alternativeName>
</protein>